<accession>B8H163</accession>
<accession>P48211</accession>
<organism>
    <name type="scientific">Caulobacter vibrioides (strain NA1000 / CB15N)</name>
    <name type="common">Caulobacter crescentus</name>
    <dbReference type="NCBI Taxonomy" id="565050"/>
    <lineage>
        <taxon>Bacteria</taxon>
        <taxon>Pseudomonadati</taxon>
        <taxon>Pseudomonadota</taxon>
        <taxon>Alphaproteobacteria</taxon>
        <taxon>Caulobacterales</taxon>
        <taxon>Caulobacteraceae</taxon>
        <taxon>Caulobacter</taxon>
    </lineage>
</organism>
<protein>
    <recommendedName>
        <fullName evidence="1">Chaperonin GroEL</fullName>
        <ecNumber evidence="1">5.6.1.7</ecNumber>
    </recommendedName>
    <alternativeName>
        <fullName evidence="1">60 kDa chaperonin</fullName>
    </alternativeName>
    <alternativeName>
        <fullName evidence="1">Chaperonin-60</fullName>
        <shortName evidence="1">Cpn60</shortName>
    </alternativeName>
</protein>
<feature type="chain" id="PRO_0000378279" description="Chaperonin GroEL">
    <location>
        <begin position="1"/>
        <end position="547"/>
    </location>
</feature>
<feature type="region of interest" description="Disordered" evidence="2">
    <location>
        <begin position="528"/>
        <end position="547"/>
    </location>
</feature>
<feature type="binding site" evidence="1">
    <location>
        <begin position="30"/>
        <end position="33"/>
    </location>
    <ligand>
        <name>ATP</name>
        <dbReference type="ChEBI" id="CHEBI:30616"/>
    </ligand>
</feature>
<feature type="binding site" evidence="1">
    <location>
        <position position="51"/>
    </location>
    <ligand>
        <name>ATP</name>
        <dbReference type="ChEBI" id="CHEBI:30616"/>
    </ligand>
</feature>
<feature type="binding site" evidence="1">
    <location>
        <begin position="87"/>
        <end position="91"/>
    </location>
    <ligand>
        <name>ATP</name>
        <dbReference type="ChEBI" id="CHEBI:30616"/>
    </ligand>
</feature>
<feature type="binding site" evidence="1">
    <location>
        <position position="415"/>
    </location>
    <ligand>
        <name>ATP</name>
        <dbReference type="ChEBI" id="CHEBI:30616"/>
    </ligand>
</feature>
<feature type="binding site" evidence="1">
    <location>
        <position position="496"/>
    </location>
    <ligand>
        <name>ATP</name>
        <dbReference type="ChEBI" id="CHEBI:30616"/>
    </ligand>
</feature>
<feature type="sequence conflict" description="In Ref. 1; AAB18635." evidence="4" ref="1">
    <original>G</original>
    <variation>A</variation>
    <location>
        <position position="45"/>
    </location>
</feature>
<feature type="sequence conflict" description="In Ref. 1; AAB18635." evidence="4" ref="1">
    <original>FE</original>
    <variation>SR</variation>
    <location>
        <begin position="223"/>
        <end position="224"/>
    </location>
</feature>
<feature type="sequence conflict" description="In Ref. 1; AAB18635." evidence="4" ref="1">
    <location>
        <position position="234"/>
    </location>
</feature>
<feature type="sequence conflict" description="In Ref. 1; AAB18635." evidence="4" ref="1">
    <original>LAG</original>
    <variation>SA</variation>
    <location>
        <begin position="426"/>
        <end position="428"/>
    </location>
</feature>
<feature type="sequence conflict" description="In Ref. 1; AAB18635." evidence="4" ref="1">
    <original>EAPKKGGGA</original>
    <variation>VSPQEGRRR</variation>
    <location>
        <begin position="524"/>
        <end position="532"/>
    </location>
</feature>
<name>CH60_CAUVN</name>
<proteinExistence type="evidence at transcript level"/>
<evidence type="ECO:0000255" key="1">
    <source>
        <dbReference type="HAMAP-Rule" id="MF_00600"/>
    </source>
</evidence>
<evidence type="ECO:0000256" key="2">
    <source>
        <dbReference type="SAM" id="MobiDB-lite"/>
    </source>
</evidence>
<evidence type="ECO:0000269" key="3">
    <source>
    </source>
</evidence>
<evidence type="ECO:0000305" key="4"/>
<comment type="function">
    <text evidence="1">Together with its co-chaperonin GroES, plays an essential role in assisting protein folding. The GroEL-GroES system forms a nano-cage that allows encapsulation of the non-native substrate proteins and provides a physical environment optimized to promote and accelerate protein folding.</text>
</comment>
<comment type="catalytic activity">
    <reaction evidence="1">
        <text>ATP + H2O + a folded polypeptide = ADP + phosphate + an unfolded polypeptide.</text>
        <dbReference type="EC" id="5.6.1.7"/>
    </reaction>
</comment>
<comment type="subunit">
    <text evidence="1">Forms a cylinder of 14 subunits composed of two heptameric rings stacked back-to-back. Interacts with the co-chaperonin GroES.</text>
</comment>
<comment type="subcellular location">
    <subcellularLocation>
        <location evidence="1">Cytoplasm</location>
    </subcellularLocation>
</comment>
<comment type="developmental stage">
    <text>Decreases slightly during the first hour of the cell cycle then increases to maximal levels by 2 hours, at the protein level.</text>
</comment>
<comment type="induction">
    <text evidence="3">By heat shock.</text>
</comment>
<comment type="similarity">
    <text evidence="1">Belongs to the chaperonin (HSP60) family.</text>
</comment>
<gene>
    <name evidence="1" type="primary">groEL</name>
    <name evidence="1" type="synonym">groL</name>
    <name type="synonym">mopA</name>
    <name type="ordered locus">CCNA_00721</name>
</gene>
<reference key="1">
    <citation type="journal article" date="1996" name="Mol. Microbiol.">
        <title>Expression of the groESL operon is cell-cycle controlled in Caulobacter crescentus.</title>
        <authorList>
            <person name="Avedissian M."/>
            <person name="Gomes S.L."/>
        </authorList>
    </citation>
    <scope>NUCLEOTIDE SEQUENCE [GENOMIC DNA]</scope>
    <scope>PROTEIN LEVELS</scope>
    <scope>OPERON STRUCTURE</scope>
    <scope>INDUCTION</scope>
</reference>
<reference key="2">
    <citation type="journal article" date="2010" name="J. Bacteriol.">
        <title>The genetic basis of laboratory adaptation in Caulobacter crescentus.</title>
        <authorList>
            <person name="Marks M.E."/>
            <person name="Castro-Rojas C.M."/>
            <person name="Teiling C."/>
            <person name="Du L."/>
            <person name="Kapatral V."/>
            <person name="Walunas T.L."/>
            <person name="Crosson S."/>
        </authorList>
    </citation>
    <scope>NUCLEOTIDE SEQUENCE [LARGE SCALE GENOMIC DNA]</scope>
    <source>
        <strain>NA1000 / CB15N</strain>
    </source>
</reference>
<dbReference type="EC" id="5.6.1.7" evidence="1"/>
<dbReference type="EMBL" id="L41394">
    <property type="protein sequence ID" value="AAB18635.1"/>
    <property type="molecule type" value="Genomic_DNA"/>
</dbReference>
<dbReference type="EMBL" id="CP001340">
    <property type="protein sequence ID" value="ACL94186.1"/>
    <property type="molecule type" value="Genomic_DNA"/>
</dbReference>
<dbReference type="RefSeq" id="WP_010918571.1">
    <property type="nucleotide sequence ID" value="NC_011916.1"/>
</dbReference>
<dbReference type="RefSeq" id="YP_002516094.1">
    <property type="nucleotide sequence ID" value="NC_011916.1"/>
</dbReference>
<dbReference type="SMR" id="B8H163"/>
<dbReference type="GeneID" id="7330530"/>
<dbReference type="KEGG" id="ccs:CCNA_00721"/>
<dbReference type="PATRIC" id="fig|565050.3.peg.711"/>
<dbReference type="HOGENOM" id="CLU_016503_3_0_5"/>
<dbReference type="OrthoDB" id="9766614at2"/>
<dbReference type="PhylomeDB" id="B8H163"/>
<dbReference type="Proteomes" id="UP000001364">
    <property type="component" value="Chromosome"/>
</dbReference>
<dbReference type="GO" id="GO:0005737">
    <property type="term" value="C:cytoplasm"/>
    <property type="evidence" value="ECO:0007669"/>
    <property type="project" value="UniProtKB-SubCell"/>
</dbReference>
<dbReference type="GO" id="GO:0005524">
    <property type="term" value="F:ATP binding"/>
    <property type="evidence" value="ECO:0007669"/>
    <property type="project" value="UniProtKB-UniRule"/>
</dbReference>
<dbReference type="GO" id="GO:0140662">
    <property type="term" value="F:ATP-dependent protein folding chaperone"/>
    <property type="evidence" value="ECO:0007669"/>
    <property type="project" value="InterPro"/>
</dbReference>
<dbReference type="GO" id="GO:0016853">
    <property type="term" value="F:isomerase activity"/>
    <property type="evidence" value="ECO:0007669"/>
    <property type="project" value="UniProtKB-KW"/>
</dbReference>
<dbReference type="GO" id="GO:0051082">
    <property type="term" value="F:unfolded protein binding"/>
    <property type="evidence" value="ECO:0007669"/>
    <property type="project" value="UniProtKB-UniRule"/>
</dbReference>
<dbReference type="GO" id="GO:0042026">
    <property type="term" value="P:protein refolding"/>
    <property type="evidence" value="ECO:0007669"/>
    <property type="project" value="UniProtKB-UniRule"/>
</dbReference>
<dbReference type="CDD" id="cd03344">
    <property type="entry name" value="GroEL"/>
    <property type="match status" value="1"/>
</dbReference>
<dbReference type="FunFam" id="1.10.560.10:FF:000001">
    <property type="entry name" value="60 kDa chaperonin"/>
    <property type="match status" value="1"/>
</dbReference>
<dbReference type="FunFam" id="3.50.7.10:FF:000001">
    <property type="entry name" value="60 kDa chaperonin"/>
    <property type="match status" value="1"/>
</dbReference>
<dbReference type="Gene3D" id="3.50.7.10">
    <property type="entry name" value="GroEL"/>
    <property type="match status" value="1"/>
</dbReference>
<dbReference type="Gene3D" id="1.10.560.10">
    <property type="entry name" value="GroEL-like equatorial domain"/>
    <property type="match status" value="1"/>
</dbReference>
<dbReference type="Gene3D" id="3.30.260.10">
    <property type="entry name" value="TCP-1-like chaperonin intermediate domain"/>
    <property type="match status" value="1"/>
</dbReference>
<dbReference type="HAMAP" id="MF_00600">
    <property type="entry name" value="CH60"/>
    <property type="match status" value="1"/>
</dbReference>
<dbReference type="InterPro" id="IPR018370">
    <property type="entry name" value="Chaperonin_Cpn60_CS"/>
</dbReference>
<dbReference type="InterPro" id="IPR001844">
    <property type="entry name" value="Cpn60/GroEL"/>
</dbReference>
<dbReference type="InterPro" id="IPR002423">
    <property type="entry name" value="Cpn60/GroEL/TCP-1"/>
</dbReference>
<dbReference type="InterPro" id="IPR027409">
    <property type="entry name" value="GroEL-like_apical_dom_sf"/>
</dbReference>
<dbReference type="InterPro" id="IPR027413">
    <property type="entry name" value="GROEL-like_equatorial_sf"/>
</dbReference>
<dbReference type="InterPro" id="IPR027410">
    <property type="entry name" value="TCP-1-like_intermed_sf"/>
</dbReference>
<dbReference type="NCBIfam" id="TIGR02348">
    <property type="entry name" value="GroEL"/>
    <property type="match status" value="1"/>
</dbReference>
<dbReference type="NCBIfam" id="NF000592">
    <property type="entry name" value="PRK00013.1"/>
    <property type="match status" value="1"/>
</dbReference>
<dbReference type="NCBIfam" id="NF009487">
    <property type="entry name" value="PRK12849.1"/>
    <property type="match status" value="1"/>
</dbReference>
<dbReference type="NCBIfam" id="NF009488">
    <property type="entry name" value="PRK12850.1"/>
    <property type="match status" value="1"/>
</dbReference>
<dbReference type="NCBIfam" id="NF009489">
    <property type="entry name" value="PRK12851.1"/>
    <property type="match status" value="1"/>
</dbReference>
<dbReference type="PANTHER" id="PTHR45633">
    <property type="entry name" value="60 KDA HEAT SHOCK PROTEIN, MITOCHONDRIAL"/>
    <property type="match status" value="1"/>
</dbReference>
<dbReference type="Pfam" id="PF00118">
    <property type="entry name" value="Cpn60_TCP1"/>
    <property type="match status" value="1"/>
</dbReference>
<dbReference type="PRINTS" id="PR00298">
    <property type="entry name" value="CHAPERONIN60"/>
</dbReference>
<dbReference type="SUPFAM" id="SSF52029">
    <property type="entry name" value="GroEL apical domain-like"/>
    <property type="match status" value="1"/>
</dbReference>
<dbReference type="SUPFAM" id="SSF48592">
    <property type="entry name" value="GroEL equatorial domain-like"/>
    <property type="match status" value="1"/>
</dbReference>
<dbReference type="SUPFAM" id="SSF54849">
    <property type="entry name" value="GroEL-intermediate domain like"/>
    <property type="match status" value="1"/>
</dbReference>
<dbReference type="PROSITE" id="PS00296">
    <property type="entry name" value="CHAPERONINS_CPN60"/>
    <property type="match status" value="1"/>
</dbReference>
<sequence length="547" mass="57397">MAAKDVYFSSDARDKMLRGVNILANAVKVTLGPKGRNVVIEKSFGAPRTTKDGVSVAKEIELADKFENLGAQMIREVASKTNDKAGDGTTTATVLAQAIVQEGLKSVAAGMNPMDLKRGIDKAVAIAIEDIKTSSKKVTTNAEIAQVGTISANGDKEVGEMIAKAMDKVGNEGVITVEEAKTAETELDVVEGMQFDRGYLSPYFITNADKMEVQLEEPLILLFEKKLSSLQPLLPVLEAVVQSGRPLLIIAEDVEGEALATLVVNKLRGGLRVAAVKAPGFGDRRKAMLEDIAILTGAQVVSEDIGIKLENVSLEMLGRAKKVSITKDDTTIVDGVGEKADIEARIAQIKRQIEDTTSDYDKEKLQERLAKLAGGVAVIRVGGSTEVEVKEKKDRVDDALNATRAAADEGIVPGGGTALLKASKALAGVVGDNDDQTAGIAIVRRALQAPIRQIAENAGVEGSIVVGKILENDNSAFGFNAQTEQYVDLVVDGVIDPAKVVRTALQNAASVAGLLITTEAAIVEAPKKGGGAPAGGGMPGGMGDMDF</sequence>
<keyword id="KW-0067">ATP-binding</keyword>
<keyword id="KW-0143">Chaperone</keyword>
<keyword id="KW-0963">Cytoplasm</keyword>
<keyword id="KW-0413">Isomerase</keyword>
<keyword id="KW-0547">Nucleotide-binding</keyword>
<keyword id="KW-1185">Reference proteome</keyword>